<name>TESK1_MOUSE</name>
<gene>
    <name type="primary">Tesk1</name>
</gene>
<protein>
    <recommendedName>
        <fullName>Dual specificity testis-specific protein kinase 1</fullName>
        <ecNumber>2.7.12.1</ecNumber>
    </recommendedName>
    <alternativeName>
        <fullName>Testicular protein kinase 1</fullName>
    </alternativeName>
</protein>
<sequence>MAGERPPLRGPGPGEAPGEGPGGAGGGPGRGRPSSYRALRSAVSSLARVDDFDCAEKIGAGFFSEVYKVRHRQSGQVMVLKMNKLPSNRSNTLREVQLMNRLRHPNILRFMGVCVHQGQLHALTEYMNGGTLEQLLSSPEPLSWPVRLHLALDIAQGLRYLHAKGVFHRDLTSKNCLVRREDRGFTAVVGDFGLAEKIPVYREGTRKEPLAVVGSPYWMAPEVLRGELYDEKADVFAFGIVLCELIARVPADPDYLPRTEDFGLDVPAFRTLVGNDCPLPFLLLAIHCCSMEPSTRAPFTEITQHLEQILEQQPEATPLAKPPLTKAPLTYNQGSVPRGGPSATLPRPDPRLSRSRSDLFLPPSPESPPSWGDNLTRVNPFSLREDLRGGKIKLLDTPCKPATPLPLVPPSPLTSTQLPLVTTPDILVQPETPVRRCRSLPSSPELPRRMETALPGPGPSPMGPTEERMDCEGSSPEPEPPGLAPQLPLAVATDNFISTCSSASQPWSPRSGPPLNNNPPAVVVNSPQGWAREPWNRAQHSLPRAAALERTEPSPPPSAPREPEEGLPCPGCCLGPFSFGFLSMCPRPTPAVARYRNLNCEAGSLLCHRGHHAKPPTPSLQLPGARS</sequence>
<proteinExistence type="evidence at protein level"/>
<reference key="1">
    <citation type="journal article" date="1998" name="Gene">
        <title>Structural organization and chromosomal localization of the mouse tesk1 (testis-specific protein kinase 1) gene.</title>
        <authorList>
            <person name="Toshima J."/>
            <person name="Nakagawara K."/>
            <person name="Mori M."/>
            <person name="Noda T."/>
            <person name="Mizuno K."/>
        </authorList>
    </citation>
    <scope>NUCLEOTIDE SEQUENCE [GENOMIC DNA / MRNA]</scope>
    <scope>TISSUE SPECIFICITY</scope>
    <source>
        <strain>129/Sv</strain>
    </source>
</reference>
<reference key="2">
    <citation type="journal article" date="2005" name="Science">
        <title>The transcriptional landscape of the mammalian genome.</title>
        <authorList>
            <person name="Carninci P."/>
            <person name="Kasukawa T."/>
            <person name="Katayama S."/>
            <person name="Gough J."/>
            <person name="Frith M.C."/>
            <person name="Maeda N."/>
            <person name="Oyama R."/>
            <person name="Ravasi T."/>
            <person name="Lenhard B."/>
            <person name="Wells C."/>
            <person name="Kodzius R."/>
            <person name="Shimokawa K."/>
            <person name="Bajic V.B."/>
            <person name="Brenner S.E."/>
            <person name="Batalov S."/>
            <person name="Forrest A.R."/>
            <person name="Zavolan M."/>
            <person name="Davis M.J."/>
            <person name="Wilming L.G."/>
            <person name="Aidinis V."/>
            <person name="Allen J.E."/>
            <person name="Ambesi-Impiombato A."/>
            <person name="Apweiler R."/>
            <person name="Aturaliya R.N."/>
            <person name="Bailey T.L."/>
            <person name="Bansal M."/>
            <person name="Baxter L."/>
            <person name="Beisel K.W."/>
            <person name="Bersano T."/>
            <person name="Bono H."/>
            <person name="Chalk A.M."/>
            <person name="Chiu K.P."/>
            <person name="Choudhary V."/>
            <person name="Christoffels A."/>
            <person name="Clutterbuck D.R."/>
            <person name="Crowe M.L."/>
            <person name="Dalla E."/>
            <person name="Dalrymple B.P."/>
            <person name="de Bono B."/>
            <person name="Della Gatta G."/>
            <person name="di Bernardo D."/>
            <person name="Down T."/>
            <person name="Engstrom P."/>
            <person name="Fagiolini M."/>
            <person name="Faulkner G."/>
            <person name="Fletcher C.F."/>
            <person name="Fukushima T."/>
            <person name="Furuno M."/>
            <person name="Futaki S."/>
            <person name="Gariboldi M."/>
            <person name="Georgii-Hemming P."/>
            <person name="Gingeras T.R."/>
            <person name="Gojobori T."/>
            <person name="Green R.E."/>
            <person name="Gustincich S."/>
            <person name="Harbers M."/>
            <person name="Hayashi Y."/>
            <person name="Hensch T.K."/>
            <person name="Hirokawa N."/>
            <person name="Hill D."/>
            <person name="Huminiecki L."/>
            <person name="Iacono M."/>
            <person name="Ikeo K."/>
            <person name="Iwama A."/>
            <person name="Ishikawa T."/>
            <person name="Jakt M."/>
            <person name="Kanapin A."/>
            <person name="Katoh M."/>
            <person name="Kawasawa Y."/>
            <person name="Kelso J."/>
            <person name="Kitamura H."/>
            <person name="Kitano H."/>
            <person name="Kollias G."/>
            <person name="Krishnan S.P."/>
            <person name="Kruger A."/>
            <person name="Kummerfeld S.K."/>
            <person name="Kurochkin I.V."/>
            <person name="Lareau L.F."/>
            <person name="Lazarevic D."/>
            <person name="Lipovich L."/>
            <person name="Liu J."/>
            <person name="Liuni S."/>
            <person name="McWilliam S."/>
            <person name="Madan Babu M."/>
            <person name="Madera M."/>
            <person name="Marchionni L."/>
            <person name="Matsuda H."/>
            <person name="Matsuzawa S."/>
            <person name="Miki H."/>
            <person name="Mignone F."/>
            <person name="Miyake S."/>
            <person name="Morris K."/>
            <person name="Mottagui-Tabar S."/>
            <person name="Mulder N."/>
            <person name="Nakano N."/>
            <person name="Nakauchi H."/>
            <person name="Ng P."/>
            <person name="Nilsson R."/>
            <person name="Nishiguchi S."/>
            <person name="Nishikawa S."/>
            <person name="Nori F."/>
            <person name="Ohara O."/>
            <person name="Okazaki Y."/>
            <person name="Orlando V."/>
            <person name="Pang K.C."/>
            <person name="Pavan W.J."/>
            <person name="Pavesi G."/>
            <person name="Pesole G."/>
            <person name="Petrovsky N."/>
            <person name="Piazza S."/>
            <person name="Reed J."/>
            <person name="Reid J.F."/>
            <person name="Ring B.Z."/>
            <person name="Ringwald M."/>
            <person name="Rost B."/>
            <person name="Ruan Y."/>
            <person name="Salzberg S.L."/>
            <person name="Sandelin A."/>
            <person name="Schneider C."/>
            <person name="Schoenbach C."/>
            <person name="Sekiguchi K."/>
            <person name="Semple C.A."/>
            <person name="Seno S."/>
            <person name="Sessa L."/>
            <person name="Sheng Y."/>
            <person name="Shibata Y."/>
            <person name="Shimada H."/>
            <person name="Shimada K."/>
            <person name="Silva D."/>
            <person name="Sinclair B."/>
            <person name="Sperling S."/>
            <person name="Stupka E."/>
            <person name="Sugiura K."/>
            <person name="Sultana R."/>
            <person name="Takenaka Y."/>
            <person name="Taki K."/>
            <person name="Tammoja K."/>
            <person name="Tan S.L."/>
            <person name="Tang S."/>
            <person name="Taylor M.S."/>
            <person name="Tegner J."/>
            <person name="Teichmann S.A."/>
            <person name="Ueda H.R."/>
            <person name="van Nimwegen E."/>
            <person name="Verardo R."/>
            <person name="Wei C.L."/>
            <person name="Yagi K."/>
            <person name="Yamanishi H."/>
            <person name="Zabarovsky E."/>
            <person name="Zhu S."/>
            <person name="Zimmer A."/>
            <person name="Hide W."/>
            <person name="Bult C."/>
            <person name="Grimmond S.M."/>
            <person name="Teasdale R.D."/>
            <person name="Liu E.T."/>
            <person name="Brusic V."/>
            <person name="Quackenbush J."/>
            <person name="Wahlestedt C."/>
            <person name="Mattick J.S."/>
            <person name="Hume D.A."/>
            <person name="Kai C."/>
            <person name="Sasaki D."/>
            <person name="Tomaru Y."/>
            <person name="Fukuda S."/>
            <person name="Kanamori-Katayama M."/>
            <person name="Suzuki M."/>
            <person name="Aoki J."/>
            <person name="Arakawa T."/>
            <person name="Iida J."/>
            <person name="Imamura K."/>
            <person name="Itoh M."/>
            <person name="Kato T."/>
            <person name="Kawaji H."/>
            <person name="Kawagashira N."/>
            <person name="Kawashima T."/>
            <person name="Kojima M."/>
            <person name="Kondo S."/>
            <person name="Konno H."/>
            <person name="Nakano K."/>
            <person name="Ninomiya N."/>
            <person name="Nishio T."/>
            <person name="Okada M."/>
            <person name="Plessy C."/>
            <person name="Shibata K."/>
            <person name="Shiraki T."/>
            <person name="Suzuki S."/>
            <person name="Tagami M."/>
            <person name="Waki K."/>
            <person name="Watahiki A."/>
            <person name="Okamura-Oho Y."/>
            <person name="Suzuki H."/>
            <person name="Kawai J."/>
            <person name="Hayashizaki Y."/>
        </authorList>
    </citation>
    <scope>NUCLEOTIDE SEQUENCE [LARGE SCALE MRNA]</scope>
    <source>
        <strain>C57BL/6J</strain>
        <tissue>Testis</tissue>
    </source>
</reference>
<reference key="3">
    <citation type="journal article" date="2009" name="PLoS Biol.">
        <title>Lineage-specific biology revealed by a finished genome assembly of the mouse.</title>
        <authorList>
            <person name="Church D.M."/>
            <person name="Goodstadt L."/>
            <person name="Hillier L.W."/>
            <person name="Zody M.C."/>
            <person name="Goldstein S."/>
            <person name="She X."/>
            <person name="Bult C.J."/>
            <person name="Agarwala R."/>
            <person name="Cherry J.L."/>
            <person name="DiCuccio M."/>
            <person name="Hlavina W."/>
            <person name="Kapustin Y."/>
            <person name="Meric P."/>
            <person name="Maglott D."/>
            <person name="Birtle Z."/>
            <person name="Marques A.C."/>
            <person name="Graves T."/>
            <person name="Zhou S."/>
            <person name="Teague B."/>
            <person name="Potamousis K."/>
            <person name="Churas C."/>
            <person name="Place M."/>
            <person name="Herschleb J."/>
            <person name="Runnheim R."/>
            <person name="Forrest D."/>
            <person name="Amos-Landgraf J."/>
            <person name="Schwartz D.C."/>
            <person name="Cheng Z."/>
            <person name="Lindblad-Toh K."/>
            <person name="Eichler E.E."/>
            <person name="Ponting C.P."/>
        </authorList>
    </citation>
    <scope>NUCLEOTIDE SEQUENCE [LARGE SCALE GENOMIC DNA]</scope>
    <source>
        <strain>C57BL/6J</strain>
    </source>
</reference>
<reference key="4">
    <citation type="journal article" date="2004" name="Genome Res.">
        <title>The status, quality, and expansion of the NIH full-length cDNA project: the Mammalian Gene Collection (MGC).</title>
        <authorList>
            <consortium name="The MGC Project Team"/>
        </authorList>
    </citation>
    <scope>NUCLEOTIDE SEQUENCE [LARGE SCALE MRNA]</scope>
    <source>
        <strain>C57BL/6J</strain>
        <tissue>Brain</tissue>
    </source>
</reference>
<reference key="5">
    <citation type="journal article" date="2008" name="J. Biol. Chem.">
        <title>Tesk1 interacts with Spry2 to abrogate its inhibition of ERK phosphorylation downstream of receptor tyrosine kinase signaling.</title>
        <authorList>
            <person name="Chandramouli S."/>
            <person name="Yu C.Y."/>
            <person name="Yusoff P."/>
            <person name="Lao D.H."/>
            <person name="Leong H.F."/>
            <person name="Mizuno K."/>
            <person name="Guy G.R."/>
        </authorList>
    </citation>
    <scope>INTERACTION WITH SPRY2</scope>
    <scope>TISSUE SPECIFICITY</scope>
</reference>
<reference key="6">
    <citation type="journal article" date="2010" name="Cell">
        <title>A tissue-specific atlas of mouse protein phosphorylation and expression.</title>
        <authorList>
            <person name="Huttlin E.L."/>
            <person name="Jedrychowski M.P."/>
            <person name="Elias J.E."/>
            <person name="Goswami T."/>
            <person name="Rad R."/>
            <person name="Beausoleil S.A."/>
            <person name="Villen J."/>
            <person name="Haas W."/>
            <person name="Sowa M.E."/>
            <person name="Gygi S.P."/>
        </authorList>
    </citation>
    <scope>IDENTIFICATION BY MASS SPECTROMETRY [LARGE SCALE ANALYSIS]</scope>
    <source>
        <tissue>Testis</tissue>
    </source>
</reference>
<reference key="7">
    <citation type="journal article" date="2014" name="Mol. Cell. Proteomics">
        <title>Immunoaffinity enrichment and mass spectrometry analysis of protein methylation.</title>
        <authorList>
            <person name="Guo A."/>
            <person name="Gu H."/>
            <person name="Zhou J."/>
            <person name="Mulhern D."/>
            <person name="Wang Y."/>
            <person name="Lee K.A."/>
            <person name="Yang V."/>
            <person name="Aguiar M."/>
            <person name="Kornhauser J."/>
            <person name="Jia X."/>
            <person name="Ren J."/>
            <person name="Beausoleil S.A."/>
            <person name="Silva J.C."/>
            <person name="Vemulapalli V."/>
            <person name="Bedford M.T."/>
            <person name="Comb M.J."/>
        </authorList>
    </citation>
    <scope>METHYLATION [LARGE SCALE ANALYSIS] AT ARG-338</scope>
    <scope>IDENTIFICATION BY MASS SPECTROMETRY [LARGE SCALE ANALYSIS]</scope>
    <source>
        <tissue>Brain</tissue>
    </source>
</reference>
<reference key="8">
    <citation type="journal article" date="2018" name="Sci. Rep.">
        <title>Regulation of cofilin phosphorylation in glomerular podocytes by testis specific kinase 1 (TESK1).</title>
        <authorList>
            <person name="Wang L."/>
            <person name="Buckley A.F."/>
            <person name="Spurney R.F."/>
        </authorList>
    </citation>
    <scope>FUNCTION</scope>
</reference>
<keyword id="KW-0067">ATP-binding</keyword>
<keyword id="KW-0966">Cell projection</keyword>
<keyword id="KW-0963">Cytoplasm</keyword>
<keyword id="KW-0206">Cytoskeleton</keyword>
<keyword id="KW-0418">Kinase</keyword>
<keyword id="KW-0460">Magnesium</keyword>
<keyword id="KW-0464">Manganese</keyword>
<keyword id="KW-0479">Metal-binding</keyword>
<keyword id="KW-0488">Methylation</keyword>
<keyword id="KW-0547">Nucleotide-binding</keyword>
<keyword id="KW-0597">Phosphoprotein</keyword>
<keyword id="KW-1185">Reference proteome</keyword>
<keyword id="KW-0723">Serine/threonine-protein kinase</keyword>
<keyword id="KW-0808">Transferase</keyword>
<keyword id="KW-0829">Tyrosine-protein kinase</keyword>
<accession>O70146</accession>
<accession>O70147</accession>
<accession>Q499W7</accession>
<evidence type="ECO:0000250" key="1"/>
<evidence type="ECO:0000250" key="2">
    <source>
        <dbReference type="UniProtKB" id="Q15569"/>
    </source>
</evidence>
<evidence type="ECO:0000250" key="3">
    <source>
        <dbReference type="UniProtKB" id="Q63572"/>
    </source>
</evidence>
<evidence type="ECO:0000255" key="4">
    <source>
        <dbReference type="PROSITE-ProRule" id="PRU00159"/>
    </source>
</evidence>
<evidence type="ECO:0000255" key="5">
    <source>
        <dbReference type="PROSITE-ProRule" id="PRU10028"/>
    </source>
</evidence>
<evidence type="ECO:0000256" key="6">
    <source>
        <dbReference type="SAM" id="MobiDB-lite"/>
    </source>
</evidence>
<evidence type="ECO:0000269" key="7">
    <source>
    </source>
</evidence>
<evidence type="ECO:0000269" key="8">
    <source>
    </source>
</evidence>
<evidence type="ECO:0000269" key="9">
    <source>
    </source>
</evidence>
<evidence type="ECO:0000305" key="10"/>
<evidence type="ECO:0007744" key="11">
    <source>
    </source>
</evidence>
<dbReference type="EC" id="2.7.12.1"/>
<dbReference type="EMBL" id="AB003493">
    <property type="protein sequence ID" value="BAA25124.1"/>
    <property type="molecule type" value="Genomic_DNA"/>
</dbReference>
<dbReference type="EMBL" id="AB003494">
    <property type="protein sequence ID" value="BAA25125.1"/>
    <property type="molecule type" value="mRNA"/>
</dbReference>
<dbReference type="EMBL" id="AK144302">
    <property type="protein sequence ID" value="BAE25822.1"/>
    <property type="molecule type" value="mRNA"/>
</dbReference>
<dbReference type="EMBL" id="AL732506">
    <property type="status" value="NOT_ANNOTATED_CDS"/>
    <property type="molecule type" value="Genomic_DNA"/>
</dbReference>
<dbReference type="EMBL" id="BC099699">
    <property type="protein sequence ID" value="AAH99699.1"/>
    <property type="molecule type" value="mRNA"/>
</dbReference>
<dbReference type="CCDS" id="CCDS18094.1"/>
<dbReference type="PIR" id="JC6534">
    <property type="entry name" value="JC6534"/>
</dbReference>
<dbReference type="RefSeq" id="NP_035701.3">
    <property type="nucleotide sequence ID" value="NM_011571.3"/>
</dbReference>
<dbReference type="SMR" id="O70146"/>
<dbReference type="BioGRID" id="204120">
    <property type="interactions" value="2"/>
</dbReference>
<dbReference type="FunCoup" id="O70146">
    <property type="interactions" value="2160"/>
</dbReference>
<dbReference type="STRING" id="10090.ENSMUSP00000050087"/>
<dbReference type="GlyGen" id="O70146">
    <property type="glycosylation" value="3 sites, 1 N-linked glycan (1 site)"/>
</dbReference>
<dbReference type="iPTMnet" id="O70146"/>
<dbReference type="PhosphoSitePlus" id="O70146"/>
<dbReference type="SwissPalm" id="O70146"/>
<dbReference type="PaxDb" id="10090-ENSMUSP00000050087"/>
<dbReference type="ProteomicsDB" id="258856"/>
<dbReference type="Pumba" id="O70146"/>
<dbReference type="Antibodypedia" id="2068">
    <property type="antibodies" value="161 antibodies from 27 providers"/>
</dbReference>
<dbReference type="DNASU" id="21754"/>
<dbReference type="Ensembl" id="ENSMUST00000060864.13">
    <property type="protein sequence ID" value="ENSMUSP00000050087.7"/>
    <property type="gene ID" value="ENSMUSG00000028458.13"/>
</dbReference>
<dbReference type="GeneID" id="21754"/>
<dbReference type="KEGG" id="mmu:21754"/>
<dbReference type="UCSC" id="uc008spq.2">
    <property type="organism name" value="mouse"/>
</dbReference>
<dbReference type="AGR" id="MGI:1201675"/>
<dbReference type="CTD" id="7016"/>
<dbReference type="MGI" id="MGI:1201675">
    <property type="gene designation" value="Tesk1"/>
</dbReference>
<dbReference type="VEuPathDB" id="HostDB:ENSMUSG00000028458"/>
<dbReference type="eggNOG" id="ENOG502QTCP">
    <property type="taxonomic scope" value="Eukaryota"/>
</dbReference>
<dbReference type="GeneTree" id="ENSGT00940000157807"/>
<dbReference type="HOGENOM" id="CLU_018577_0_0_1"/>
<dbReference type="InParanoid" id="O70146"/>
<dbReference type="OMA" id="SPPTWGD"/>
<dbReference type="OrthoDB" id="20134at2759"/>
<dbReference type="PhylomeDB" id="O70146"/>
<dbReference type="TreeFam" id="TF318014"/>
<dbReference type="BRENDA" id="2.7.10.2">
    <property type="organism ID" value="3474"/>
</dbReference>
<dbReference type="Reactome" id="R-MMU-446388">
    <property type="pathway name" value="Regulation of cytoskeletal remodeling and cell spreading by IPP complex components"/>
</dbReference>
<dbReference type="BioGRID-ORCS" id="21754">
    <property type="hits" value="1 hit in 78 CRISPR screens"/>
</dbReference>
<dbReference type="ChiTaRS" id="Tesk1">
    <property type="organism name" value="mouse"/>
</dbReference>
<dbReference type="PRO" id="PR:O70146"/>
<dbReference type="Proteomes" id="UP000000589">
    <property type="component" value="Chromosome 4"/>
</dbReference>
<dbReference type="RNAct" id="O70146">
    <property type="molecule type" value="protein"/>
</dbReference>
<dbReference type="Bgee" id="ENSMUSG00000028458">
    <property type="expression patterns" value="Expressed in seminiferous tubule of testis and 234 other cell types or tissues"/>
</dbReference>
<dbReference type="ExpressionAtlas" id="O70146">
    <property type="expression patterns" value="baseline and differential"/>
</dbReference>
<dbReference type="GO" id="GO:0005813">
    <property type="term" value="C:centrosome"/>
    <property type="evidence" value="ECO:0000250"/>
    <property type="project" value="UniProtKB"/>
</dbReference>
<dbReference type="GO" id="GO:0005737">
    <property type="term" value="C:cytoplasm"/>
    <property type="evidence" value="ECO:0000250"/>
    <property type="project" value="UniProtKB"/>
</dbReference>
<dbReference type="GO" id="GO:0031410">
    <property type="term" value="C:cytoplasmic vesicle"/>
    <property type="evidence" value="ECO:0007669"/>
    <property type="project" value="Ensembl"/>
</dbReference>
<dbReference type="GO" id="GO:0030027">
    <property type="term" value="C:lamellipodium"/>
    <property type="evidence" value="ECO:0007669"/>
    <property type="project" value="UniProtKB-SubCell"/>
</dbReference>
<dbReference type="GO" id="GO:0048471">
    <property type="term" value="C:perinuclear region of cytoplasm"/>
    <property type="evidence" value="ECO:0000250"/>
    <property type="project" value="UniProtKB"/>
</dbReference>
<dbReference type="GO" id="GO:0005524">
    <property type="term" value="F:ATP binding"/>
    <property type="evidence" value="ECO:0007669"/>
    <property type="project" value="UniProtKB-KW"/>
</dbReference>
<dbReference type="GO" id="GO:0046872">
    <property type="term" value="F:metal ion binding"/>
    <property type="evidence" value="ECO:0007669"/>
    <property type="project" value="UniProtKB-KW"/>
</dbReference>
<dbReference type="GO" id="GO:0004672">
    <property type="term" value="F:protein kinase activity"/>
    <property type="evidence" value="ECO:0000250"/>
    <property type="project" value="UniProtKB"/>
</dbReference>
<dbReference type="GO" id="GO:0019901">
    <property type="term" value="F:protein kinase binding"/>
    <property type="evidence" value="ECO:0007669"/>
    <property type="project" value="Ensembl"/>
</dbReference>
<dbReference type="GO" id="GO:0106310">
    <property type="term" value="F:protein serine kinase activity"/>
    <property type="evidence" value="ECO:0007669"/>
    <property type="project" value="RHEA"/>
</dbReference>
<dbReference type="GO" id="GO:0004674">
    <property type="term" value="F:protein serine/threonine kinase activity"/>
    <property type="evidence" value="ECO:0007669"/>
    <property type="project" value="UniProtKB-KW"/>
</dbReference>
<dbReference type="GO" id="GO:0030291">
    <property type="term" value="F:protein serine/threonine kinase inhibitor activity"/>
    <property type="evidence" value="ECO:0007669"/>
    <property type="project" value="Ensembl"/>
</dbReference>
<dbReference type="GO" id="GO:0004712">
    <property type="term" value="F:protein serine/threonine/tyrosine kinase activity"/>
    <property type="evidence" value="ECO:0007669"/>
    <property type="project" value="UniProtKB-EC"/>
</dbReference>
<dbReference type="GO" id="GO:0004713">
    <property type="term" value="F:protein tyrosine kinase activity"/>
    <property type="evidence" value="ECO:0007669"/>
    <property type="project" value="UniProtKB-KW"/>
</dbReference>
<dbReference type="GO" id="GO:0051650">
    <property type="term" value="P:establishment of vesicle localization"/>
    <property type="evidence" value="ECO:0000250"/>
    <property type="project" value="UniProtKB"/>
</dbReference>
<dbReference type="GO" id="GO:1902018">
    <property type="term" value="P:negative regulation of cilium assembly"/>
    <property type="evidence" value="ECO:0000250"/>
    <property type="project" value="UniProtKB"/>
</dbReference>
<dbReference type="GO" id="GO:0070966">
    <property type="term" value="P:nuclear-transcribed mRNA catabolic process, no-go decay"/>
    <property type="evidence" value="ECO:0000315"/>
    <property type="project" value="UniProtKB"/>
</dbReference>
<dbReference type="GO" id="GO:0090521">
    <property type="term" value="P:podocyte cell migration"/>
    <property type="evidence" value="ECO:0000315"/>
    <property type="project" value="UniProtKB"/>
</dbReference>
<dbReference type="GO" id="GO:1900182">
    <property type="term" value="P:positive regulation of protein localization to nucleus"/>
    <property type="evidence" value="ECO:0000250"/>
    <property type="project" value="UniProtKB"/>
</dbReference>
<dbReference type="GO" id="GO:0051496">
    <property type="term" value="P:positive regulation of stress fiber assembly"/>
    <property type="evidence" value="ECO:0007669"/>
    <property type="project" value="Ensembl"/>
</dbReference>
<dbReference type="GO" id="GO:1900026">
    <property type="term" value="P:positive regulation of substrate adhesion-dependent cell spreading"/>
    <property type="evidence" value="ECO:0000250"/>
    <property type="project" value="UniProtKB"/>
</dbReference>
<dbReference type="GO" id="GO:0032956">
    <property type="term" value="P:regulation of actin cytoskeleton organization"/>
    <property type="evidence" value="ECO:0000315"/>
    <property type="project" value="UniProtKB"/>
</dbReference>
<dbReference type="GO" id="GO:0007283">
    <property type="term" value="P:spermatogenesis"/>
    <property type="evidence" value="ECO:0007669"/>
    <property type="project" value="Ensembl"/>
</dbReference>
<dbReference type="CDD" id="cd14155">
    <property type="entry name" value="PKc_TESK"/>
    <property type="match status" value="1"/>
</dbReference>
<dbReference type="FunFam" id="1.10.510.10:FF:000202">
    <property type="entry name" value="Dual specificity testis-specific protein kinase 2"/>
    <property type="match status" value="1"/>
</dbReference>
<dbReference type="FunFam" id="3.30.200.20:FF:000134">
    <property type="entry name" value="Dual specificity testis-specific protein kinase 2"/>
    <property type="match status" value="1"/>
</dbReference>
<dbReference type="Gene3D" id="3.30.200.20">
    <property type="entry name" value="Phosphorylase Kinase, domain 1"/>
    <property type="match status" value="1"/>
</dbReference>
<dbReference type="Gene3D" id="1.10.510.10">
    <property type="entry name" value="Transferase(Phosphotransferase) domain 1"/>
    <property type="match status" value="1"/>
</dbReference>
<dbReference type="InterPro" id="IPR050940">
    <property type="entry name" value="Actin_reg-Ser/Thr_kinase"/>
</dbReference>
<dbReference type="InterPro" id="IPR011009">
    <property type="entry name" value="Kinase-like_dom_sf"/>
</dbReference>
<dbReference type="InterPro" id="IPR000719">
    <property type="entry name" value="Prot_kinase_dom"/>
</dbReference>
<dbReference type="InterPro" id="IPR017441">
    <property type="entry name" value="Protein_kinase_ATP_BS"/>
</dbReference>
<dbReference type="InterPro" id="IPR001245">
    <property type="entry name" value="Ser-Thr/Tyr_kinase_cat_dom"/>
</dbReference>
<dbReference type="InterPro" id="IPR008266">
    <property type="entry name" value="Tyr_kinase_AS"/>
</dbReference>
<dbReference type="PANTHER" id="PTHR46485:SF3">
    <property type="entry name" value="DUAL SPECIFICITY TESTIS-SPECIFIC PROTEIN KINASE 1"/>
    <property type="match status" value="1"/>
</dbReference>
<dbReference type="PANTHER" id="PTHR46485">
    <property type="entry name" value="LIM DOMAIN KINASE 1"/>
    <property type="match status" value="1"/>
</dbReference>
<dbReference type="Pfam" id="PF07714">
    <property type="entry name" value="PK_Tyr_Ser-Thr"/>
    <property type="match status" value="1"/>
</dbReference>
<dbReference type="PRINTS" id="PR00109">
    <property type="entry name" value="TYRKINASE"/>
</dbReference>
<dbReference type="SUPFAM" id="SSF56112">
    <property type="entry name" value="Protein kinase-like (PK-like)"/>
    <property type="match status" value="1"/>
</dbReference>
<dbReference type="PROSITE" id="PS00107">
    <property type="entry name" value="PROTEIN_KINASE_ATP"/>
    <property type="match status" value="1"/>
</dbReference>
<dbReference type="PROSITE" id="PS50011">
    <property type="entry name" value="PROTEIN_KINASE_DOM"/>
    <property type="match status" value="1"/>
</dbReference>
<dbReference type="PROSITE" id="PS00109">
    <property type="entry name" value="PROTEIN_KINASE_TYR"/>
    <property type="match status" value="1"/>
</dbReference>
<feature type="chain" id="PRO_0000086747" description="Dual specificity testis-specific protein kinase 1">
    <location>
        <begin position="1"/>
        <end position="627"/>
    </location>
</feature>
<feature type="domain" description="Protein kinase" evidence="4">
    <location>
        <begin position="52"/>
        <end position="309"/>
    </location>
</feature>
<feature type="region of interest" description="Disordered" evidence="6">
    <location>
        <begin position="1"/>
        <end position="36"/>
    </location>
</feature>
<feature type="region of interest" description="Disordered" evidence="6">
    <location>
        <begin position="316"/>
        <end position="373"/>
    </location>
</feature>
<feature type="region of interest" description="Required for interaction with YWHAB" evidence="3">
    <location>
        <begin position="421"/>
        <end position="525"/>
    </location>
</feature>
<feature type="region of interest" description="Disordered" evidence="6">
    <location>
        <begin position="436"/>
        <end position="485"/>
    </location>
</feature>
<feature type="region of interest" description="Disordered" evidence="6">
    <location>
        <begin position="500"/>
        <end position="519"/>
    </location>
</feature>
<feature type="region of interest" description="Required for interaction with SPRED1 and SPRY2. Required for TESK1-mediated dephosphorylation of SPRY2 and SPRY2 inhibition of ERK phosphorylation" evidence="3">
    <location>
        <begin position="528"/>
        <end position="627"/>
    </location>
</feature>
<feature type="region of interest" description="Required for interaction with PARVA" evidence="3">
    <location>
        <begin position="528"/>
        <end position="625"/>
    </location>
</feature>
<feature type="region of interest" description="Disordered" evidence="6">
    <location>
        <begin position="532"/>
        <end position="565"/>
    </location>
</feature>
<feature type="compositionally biased region" description="Gly residues" evidence="6">
    <location>
        <begin position="11"/>
        <end position="30"/>
    </location>
</feature>
<feature type="compositionally biased region" description="Low complexity" evidence="6">
    <location>
        <begin position="316"/>
        <end position="330"/>
    </location>
</feature>
<feature type="compositionally biased region" description="Basic and acidic residues" evidence="6">
    <location>
        <begin position="348"/>
        <end position="357"/>
    </location>
</feature>
<feature type="active site" description="Proton acceptor" evidence="4 5">
    <location>
        <position position="170"/>
    </location>
</feature>
<feature type="binding site" evidence="4">
    <location>
        <begin position="58"/>
        <end position="66"/>
    </location>
    <ligand>
        <name>ATP</name>
        <dbReference type="ChEBI" id="CHEBI:30616"/>
    </ligand>
</feature>
<feature type="binding site" evidence="4">
    <location>
        <position position="81"/>
    </location>
    <ligand>
        <name>ATP</name>
        <dbReference type="ChEBI" id="CHEBI:30616"/>
    </ligand>
</feature>
<feature type="modified residue" description="Phosphoserine; by autocatalysis" evidence="3">
    <location>
        <position position="215"/>
    </location>
</feature>
<feature type="modified residue" description="Omega-N-methylarginine" evidence="11">
    <location>
        <position position="338"/>
    </location>
</feature>
<feature type="sequence conflict" description="In Ref. 1; BAA25124/BAA25125." evidence="10" ref="1">
    <original>R</original>
    <variation>Q</variation>
    <location>
        <position position="550"/>
    </location>
</feature>
<comment type="function">
    <text evidence="2 3 8">Dual specificity protein kinase activity catalyzing autophosphorylation and phosphorylation of exogenous substrates on both serine/threonine and tyrosine residues (By similarity). Regulates the cellular cytoskeleton by enhancing actin stress fiber formation via phosphorylation of cofilin and by preventing microtubule breakdown via inhibition of TAOK1/MARKK kinase activity (By similarity). Inhibits podocyte motility via regulation of actin cytoskeletal dynamics and phosphorylation of CFL1 (PubMed:30115939). Positively regulates integrin-mediated cell spreading, via phosphorylation of cofilin (By similarity). Suppresses ciliogenesis via multiple pathways; phosphorylation of CFL1, suppression of ciliary vesicle directional trafficking to the ciliary base, and by facilitating YAP1 nuclear localization where it acts as a transcriptional corepressor of the TEAD4 target genes AURKA and PLK1 (By similarity). Probably plays a central role at and after the meiotic phase of spermatogenesis (By similarity).</text>
</comment>
<comment type="catalytic activity">
    <reaction>
        <text>L-seryl-[protein] + ATP = O-phospho-L-seryl-[protein] + ADP + H(+)</text>
        <dbReference type="Rhea" id="RHEA:17989"/>
        <dbReference type="Rhea" id="RHEA-COMP:9863"/>
        <dbReference type="Rhea" id="RHEA-COMP:11604"/>
        <dbReference type="ChEBI" id="CHEBI:15378"/>
        <dbReference type="ChEBI" id="CHEBI:29999"/>
        <dbReference type="ChEBI" id="CHEBI:30616"/>
        <dbReference type="ChEBI" id="CHEBI:83421"/>
        <dbReference type="ChEBI" id="CHEBI:456216"/>
        <dbReference type="EC" id="2.7.12.1"/>
    </reaction>
</comment>
<comment type="catalytic activity">
    <reaction>
        <text>L-threonyl-[protein] + ATP = O-phospho-L-threonyl-[protein] + ADP + H(+)</text>
        <dbReference type="Rhea" id="RHEA:46608"/>
        <dbReference type="Rhea" id="RHEA-COMP:11060"/>
        <dbReference type="Rhea" id="RHEA-COMP:11605"/>
        <dbReference type="ChEBI" id="CHEBI:15378"/>
        <dbReference type="ChEBI" id="CHEBI:30013"/>
        <dbReference type="ChEBI" id="CHEBI:30616"/>
        <dbReference type="ChEBI" id="CHEBI:61977"/>
        <dbReference type="ChEBI" id="CHEBI:456216"/>
        <dbReference type="EC" id="2.7.12.1"/>
    </reaction>
</comment>
<comment type="catalytic activity">
    <reaction>
        <text>L-tyrosyl-[protein] + ATP = O-phospho-L-tyrosyl-[protein] + ADP + H(+)</text>
        <dbReference type="Rhea" id="RHEA:10596"/>
        <dbReference type="Rhea" id="RHEA-COMP:10136"/>
        <dbReference type="Rhea" id="RHEA-COMP:20101"/>
        <dbReference type="ChEBI" id="CHEBI:15378"/>
        <dbReference type="ChEBI" id="CHEBI:30616"/>
        <dbReference type="ChEBI" id="CHEBI:46858"/>
        <dbReference type="ChEBI" id="CHEBI:61978"/>
        <dbReference type="ChEBI" id="CHEBI:456216"/>
        <dbReference type="EC" id="2.7.12.1"/>
    </reaction>
</comment>
<comment type="cofactor">
    <cofactor evidence="1">
        <name>Mg(2+)</name>
        <dbReference type="ChEBI" id="CHEBI:18420"/>
    </cofactor>
</comment>
<comment type="cofactor">
    <cofactor evidence="1">
        <name>Mn(2+)</name>
        <dbReference type="ChEBI" id="CHEBI:29035"/>
    </cofactor>
</comment>
<comment type="activity regulation">
    <text evidence="3">Activated by autophosphorylation on Ser-215. Kinase activity is inhibited by SPRED1.</text>
</comment>
<comment type="subunit">
    <text evidence="2 3 7">Interacts (via both C- and N-termini) with SPRY4 (via C-terminus); the interaction inhibits TESK1 kinase activity (By similarity). Interacts with TAOK1; the interaction inhibits TAOK1 kinase activity (By similarity). Interacts (via C-terminus) with SPRED1 (via C-terminus); the interaction inhibits TESK1 kinase activity (By similarity). Interacts (via C-terminus) with PARVA/PARVIN (via C-terminus); the interaction inhibits TESK1 kinase activity (By similarity). Interacts with YWHAB/14-3-3 beta; the interaction is dependent on the phosphorylation of TESK1 Ser-439 and inhibits TESK1 kinase activity (By similarity). Interacts with SPRY1, SPRY3 and SPRED2 (By similarity). Interacts (via C-terminus) with SPRY2 (via C-terminus); the interaction disrupts SPRY2 interaction with PPP2CA/PP2A-C, possibly by vesicular sequestration of SPRY2 (PubMed:17974561). Therefore dephosphorylation of SPRY2 by the serine/threonine-protein phosphatase 2A (PP2A) holoenzyme is lost, inhibiting its interaction with GRB2 (By similarity).</text>
</comment>
<comment type="subcellular location">
    <subcellularLocation>
        <location evidence="2">Cytoplasm</location>
    </subcellularLocation>
    <subcellularLocation>
        <location evidence="3">Cytoplasm</location>
        <location evidence="3">Perinuclear region</location>
    </subcellularLocation>
    <subcellularLocation>
        <location evidence="2">Cytoplasm</location>
        <location evidence="2">Cytoskeleton</location>
        <location evidence="2">Microtubule organizing center</location>
        <location evidence="2">Centrosome</location>
    </subcellularLocation>
    <subcellularLocation>
        <location evidence="3">Cell projection</location>
        <location evidence="3">Lamellipodium</location>
    </subcellularLocation>
    <text evidence="2 3">Colocalizes with SPRY4 in vesicular spots in the cytoplasm (By similarity). Localized to F-actin-rich lamellipodia at the cell periphery following fibronectin-mediated cell adhesion of Schwann cells (By similarity).</text>
</comment>
<comment type="tissue specificity">
    <text evidence="7 9">Expressed in testes and brain (at protein level).</text>
</comment>
<comment type="domain">
    <text>The extracatalytic C-terminal part is highly rich in proline residues.</text>
</comment>
<comment type="PTM">
    <text evidence="3">Autophosphorylated on serine and tyrosine residues.</text>
</comment>
<comment type="similarity">
    <text evidence="10">Belongs to the protein kinase superfamily. TKL Ser/Thr protein kinase family.</text>
</comment>
<organism>
    <name type="scientific">Mus musculus</name>
    <name type="common">Mouse</name>
    <dbReference type="NCBI Taxonomy" id="10090"/>
    <lineage>
        <taxon>Eukaryota</taxon>
        <taxon>Metazoa</taxon>
        <taxon>Chordata</taxon>
        <taxon>Craniata</taxon>
        <taxon>Vertebrata</taxon>
        <taxon>Euteleostomi</taxon>
        <taxon>Mammalia</taxon>
        <taxon>Eutheria</taxon>
        <taxon>Euarchontoglires</taxon>
        <taxon>Glires</taxon>
        <taxon>Rodentia</taxon>
        <taxon>Myomorpha</taxon>
        <taxon>Muroidea</taxon>
        <taxon>Muridae</taxon>
        <taxon>Murinae</taxon>
        <taxon>Mus</taxon>
        <taxon>Mus</taxon>
    </lineage>
</organism>